<proteinExistence type="inferred from homology"/>
<comment type="function">
    <text evidence="1">Catalyzes the formation of 4-diphosphocytidyl-2-C-methyl-D-erythritol from CTP and 2-C-methyl-D-erythritol 4-phosphate (MEP).</text>
</comment>
<comment type="catalytic activity">
    <reaction evidence="1">
        <text>2-C-methyl-D-erythritol 4-phosphate + CTP + H(+) = 4-CDP-2-C-methyl-D-erythritol + diphosphate</text>
        <dbReference type="Rhea" id="RHEA:13429"/>
        <dbReference type="ChEBI" id="CHEBI:15378"/>
        <dbReference type="ChEBI" id="CHEBI:33019"/>
        <dbReference type="ChEBI" id="CHEBI:37563"/>
        <dbReference type="ChEBI" id="CHEBI:57823"/>
        <dbReference type="ChEBI" id="CHEBI:58262"/>
        <dbReference type="EC" id="2.7.7.60"/>
    </reaction>
</comment>
<comment type="pathway">
    <text evidence="1">Isoprenoid biosynthesis; isopentenyl diphosphate biosynthesis via DXP pathway; isopentenyl diphosphate from 1-deoxy-D-xylulose 5-phosphate: step 2/6.</text>
</comment>
<comment type="subunit">
    <text evidence="1">Homodimer.</text>
</comment>
<comment type="similarity">
    <text evidence="1">Belongs to the IspD/TarI cytidylyltransferase family. IspD subfamily.</text>
</comment>
<evidence type="ECO:0000255" key="1">
    <source>
        <dbReference type="HAMAP-Rule" id="MF_00108"/>
    </source>
</evidence>
<keyword id="KW-0414">Isoprene biosynthesis</keyword>
<keyword id="KW-0548">Nucleotidyltransferase</keyword>
<keyword id="KW-1185">Reference proteome</keyword>
<keyword id="KW-0808">Transferase</keyword>
<sequence>MAATLLDVCAVVPAAGFGRRMQTECPKQYLSIGNKTILEHSVHALLAHPRVTRVVIVISPGDHRFAQLPLANHPQITVVDGGNERADSVMAGLQAVAQAKWVLVHDAARPCLHQDDLARLLAISENSRVGGILASPVRDTMKRGEPGKAAIAHTVERADLWHALTPQFFPRELLHDCLTRALKEGATITDEASALEYCGFHPALVEGRADNIKVTRPEDLALAEFYLTRTIHQEKA</sequence>
<name>ISPD_SALAR</name>
<feature type="chain" id="PRO_1000075941" description="2-C-methyl-D-erythritol 4-phosphate cytidylyltransferase">
    <location>
        <begin position="1"/>
        <end position="236"/>
    </location>
</feature>
<feature type="site" description="Transition state stabilizer" evidence="1">
    <location>
        <position position="20"/>
    </location>
</feature>
<feature type="site" description="Transition state stabilizer" evidence="1">
    <location>
        <position position="27"/>
    </location>
</feature>
<feature type="site" description="Positions MEP for the nucleophilic attack" evidence="1">
    <location>
        <position position="157"/>
    </location>
</feature>
<feature type="site" description="Positions MEP for the nucleophilic attack" evidence="1">
    <location>
        <position position="213"/>
    </location>
</feature>
<organism>
    <name type="scientific">Salmonella arizonae (strain ATCC BAA-731 / CDC346-86 / RSK2980)</name>
    <dbReference type="NCBI Taxonomy" id="41514"/>
    <lineage>
        <taxon>Bacteria</taxon>
        <taxon>Pseudomonadati</taxon>
        <taxon>Pseudomonadota</taxon>
        <taxon>Gammaproteobacteria</taxon>
        <taxon>Enterobacterales</taxon>
        <taxon>Enterobacteriaceae</taxon>
        <taxon>Salmonella</taxon>
    </lineage>
</organism>
<protein>
    <recommendedName>
        <fullName evidence="1">2-C-methyl-D-erythritol 4-phosphate cytidylyltransferase</fullName>
        <ecNumber evidence="1">2.7.7.60</ecNumber>
    </recommendedName>
    <alternativeName>
        <fullName evidence="1">4-diphosphocytidyl-2C-methyl-D-erythritol synthase</fullName>
    </alternativeName>
    <alternativeName>
        <fullName evidence="1">MEP cytidylyltransferase</fullName>
        <shortName evidence="1">MCT</shortName>
    </alternativeName>
</protein>
<accession>A9MF28</accession>
<reference key="1">
    <citation type="submission" date="2007-11" db="EMBL/GenBank/DDBJ databases">
        <authorList>
            <consortium name="The Salmonella enterica serovar Arizonae Genome Sequencing Project"/>
            <person name="McClelland M."/>
            <person name="Sanderson E.K."/>
            <person name="Porwollik S."/>
            <person name="Spieth J."/>
            <person name="Clifton W.S."/>
            <person name="Fulton R."/>
            <person name="Chunyan W."/>
            <person name="Wollam A."/>
            <person name="Shah N."/>
            <person name="Pepin K."/>
            <person name="Bhonagiri V."/>
            <person name="Nash W."/>
            <person name="Johnson M."/>
            <person name="Thiruvilangam P."/>
            <person name="Wilson R."/>
        </authorList>
    </citation>
    <scope>NUCLEOTIDE SEQUENCE [LARGE SCALE GENOMIC DNA]</scope>
    <source>
        <strain>ATCC BAA-731 / CDC346-86 / RSK2980</strain>
    </source>
</reference>
<gene>
    <name evidence="1" type="primary">ispD</name>
    <name type="ordered locus">SARI_00026</name>
</gene>
<dbReference type="EC" id="2.7.7.60" evidence="1"/>
<dbReference type="EMBL" id="CP000880">
    <property type="protein sequence ID" value="ABX19980.1"/>
    <property type="molecule type" value="Genomic_DNA"/>
</dbReference>
<dbReference type="SMR" id="A9MF28"/>
<dbReference type="STRING" id="41514.SARI_00026"/>
<dbReference type="KEGG" id="ses:SARI_00026"/>
<dbReference type="HOGENOM" id="CLU_061281_3_1_6"/>
<dbReference type="UniPathway" id="UPA00056">
    <property type="reaction ID" value="UER00093"/>
</dbReference>
<dbReference type="Proteomes" id="UP000002084">
    <property type="component" value="Chromosome"/>
</dbReference>
<dbReference type="GO" id="GO:0050518">
    <property type="term" value="F:2-C-methyl-D-erythritol 4-phosphate cytidylyltransferase activity"/>
    <property type="evidence" value="ECO:0007669"/>
    <property type="project" value="UniProtKB-UniRule"/>
</dbReference>
<dbReference type="GO" id="GO:0019288">
    <property type="term" value="P:isopentenyl diphosphate biosynthetic process, methylerythritol 4-phosphate pathway"/>
    <property type="evidence" value="ECO:0007669"/>
    <property type="project" value="UniProtKB-UniRule"/>
</dbReference>
<dbReference type="CDD" id="cd02516">
    <property type="entry name" value="CDP-ME_synthetase"/>
    <property type="match status" value="1"/>
</dbReference>
<dbReference type="FunFam" id="3.90.550.10:FF:000003">
    <property type="entry name" value="2-C-methyl-D-erythritol 4-phosphate cytidylyltransferase"/>
    <property type="match status" value="1"/>
</dbReference>
<dbReference type="Gene3D" id="3.90.550.10">
    <property type="entry name" value="Spore Coat Polysaccharide Biosynthesis Protein SpsA, Chain A"/>
    <property type="match status" value="1"/>
</dbReference>
<dbReference type="HAMAP" id="MF_00108">
    <property type="entry name" value="IspD"/>
    <property type="match status" value="1"/>
</dbReference>
<dbReference type="InterPro" id="IPR001228">
    <property type="entry name" value="IspD"/>
</dbReference>
<dbReference type="InterPro" id="IPR034683">
    <property type="entry name" value="IspD/TarI"/>
</dbReference>
<dbReference type="InterPro" id="IPR050088">
    <property type="entry name" value="IspD/TarI_cytidylyltransf_bact"/>
</dbReference>
<dbReference type="InterPro" id="IPR018294">
    <property type="entry name" value="ISPD_synthase_CS"/>
</dbReference>
<dbReference type="InterPro" id="IPR029044">
    <property type="entry name" value="Nucleotide-diphossugar_trans"/>
</dbReference>
<dbReference type="NCBIfam" id="TIGR00453">
    <property type="entry name" value="ispD"/>
    <property type="match status" value="1"/>
</dbReference>
<dbReference type="PANTHER" id="PTHR32125">
    <property type="entry name" value="2-C-METHYL-D-ERYTHRITOL 4-PHOSPHATE CYTIDYLYLTRANSFERASE, CHLOROPLASTIC"/>
    <property type="match status" value="1"/>
</dbReference>
<dbReference type="PANTHER" id="PTHR32125:SF4">
    <property type="entry name" value="2-C-METHYL-D-ERYTHRITOL 4-PHOSPHATE CYTIDYLYLTRANSFERASE, CHLOROPLASTIC"/>
    <property type="match status" value="1"/>
</dbReference>
<dbReference type="Pfam" id="PF01128">
    <property type="entry name" value="IspD"/>
    <property type="match status" value="1"/>
</dbReference>
<dbReference type="SUPFAM" id="SSF53448">
    <property type="entry name" value="Nucleotide-diphospho-sugar transferases"/>
    <property type="match status" value="1"/>
</dbReference>
<dbReference type="PROSITE" id="PS01295">
    <property type="entry name" value="ISPD"/>
    <property type="match status" value="1"/>
</dbReference>